<comment type="similarity">
    <text evidence="1">Belongs to the universal ribosomal protein uS9 family.</text>
</comment>
<comment type="sequence caution" evidence="1">
    <conflict type="frameshift">
        <sequence resource="EMBL-CDS" id="CAA56483"/>
    </conflict>
</comment>
<reference key="1">
    <citation type="journal article" date="1995" name="Proc. Natl. Acad. Sci. U.S.A.">
        <title>Transcription in archaea: similarity to that in eucarya.</title>
        <authorList>
            <person name="Langer D."/>
            <person name="Hain J."/>
            <person name="Thuriaux P."/>
            <person name="Zillig W."/>
        </authorList>
    </citation>
    <scope>NUCLEOTIDE SEQUENCE [GENOMIC DNA]</scope>
    <source>
        <strain>ATCC 33909 / DSM 639 / JCM 8929 / NBRC 15157 / NCIMB 11770</strain>
    </source>
</reference>
<reference key="2">
    <citation type="journal article" date="2005" name="J. Bacteriol.">
        <title>The genome of Sulfolobus acidocaldarius, a model organism of the Crenarchaeota.</title>
        <authorList>
            <person name="Chen L."/>
            <person name="Bruegger K."/>
            <person name="Skovgaard M."/>
            <person name="Redder P."/>
            <person name="She Q."/>
            <person name="Torarinsson E."/>
            <person name="Greve B."/>
            <person name="Awayez M."/>
            <person name="Zibat A."/>
            <person name="Klenk H.-P."/>
            <person name="Garrett R.A."/>
        </authorList>
    </citation>
    <scope>NUCLEOTIDE SEQUENCE [LARGE SCALE GENOMIC DNA]</scope>
    <source>
        <strain>ATCC 33909 / DSM 639 / JCM 8929 / NBRC 15157 / NCIMB 11770</strain>
    </source>
</reference>
<accession>P39468</accession>
<accession>Q4JCG6</accession>
<gene>
    <name type="primary">rps9</name>
    <name type="ordered locus">Saci_0086</name>
</gene>
<keyword id="KW-0002">3D-structure</keyword>
<keyword id="KW-1185">Reference proteome</keyword>
<keyword id="KW-0687">Ribonucleoprotein</keyword>
<keyword id="KW-0689">Ribosomal protein</keyword>
<dbReference type="EMBL" id="X80194">
    <property type="protein sequence ID" value="CAA56483.1"/>
    <property type="status" value="ALT_FRAME"/>
    <property type="molecule type" value="Genomic_DNA"/>
</dbReference>
<dbReference type="EMBL" id="CP000077">
    <property type="protein sequence ID" value="AAY79513.1"/>
    <property type="molecule type" value="Genomic_DNA"/>
</dbReference>
<dbReference type="PIR" id="S47026">
    <property type="entry name" value="S47026"/>
</dbReference>
<dbReference type="RefSeq" id="WP_011277014.1">
    <property type="nucleotide sequence ID" value="NC_007181.1"/>
</dbReference>
<dbReference type="PDB" id="8HKX">
    <property type="method" value="EM"/>
    <property type="resolution" value="3.14 A"/>
    <property type="chains" value="AS9P=3-138"/>
</dbReference>
<dbReference type="PDB" id="8HKY">
    <property type="method" value="EM"/>
    <property type="resolution" value="4.45 A"/>
    <property type="chains" value="AS9P=3-138"/>
</dbReference>
<dbReference type="PDB" id="8HKZ">
    <property type="method" value="EM"/>
    <property type="resolution" value="4.78 A"/>
    <property type="chains" value="AS9P=3-138"/>
</dbReference>
<dbReference type="PDB" id="8HL1">
    <property type="method" value="EM"/>
    <property type="resolution" value="3.93 A"/>
    <property type="chains" value="AS9P=3-138"/>
</dbReference>
<dbReference type="PDB" id="8HL2">
    <property type="method" value="EM"/>
    <property type="resolution" value="4.10 A"/>
    <property type="chains" value="AS9P=3-138"/>
</dbReference>
<dbReference type="PDB" id="8HL3">
    <property type="method" value="EM"/>
    <property type="resolution" value="4.80 A"/>
    <property type="chains" value="AS9P=3-138"/>
</dbReference>
<dbReference type="PDB" id="8HL4">
    <property type="method" value="EM"/>
    <property type="resolution" value="4.62 A"/>
    <property type="chains" value="AS9P=3-138"/>
</dbReference>
<dbReference type="PDB" id="8HL5">
    <property type="method" value="EM"/>
    <property type="resolution" value="5.72 A"/>
    <property type="chains" value="AS9P=3-138"/>
</dbReference>
<dbReference type="PDB" id="8WKP">
    <property type="method" value="EM"/>
    <property type="resolution" value="4.62 A"/>
    <property type="chains" value="AS9P=3-138"/>
</dbReference>
<dbReference type="PDB" id="8WQ2">
    <property type="method" value="EM"/>
    <property type="resolution" value="4.10 A"/>
    <property type="chains" value="AS9P=3-138"/>
</dbReference>
<dbReference type="PDB" id="8WQ4">
    <property type="method" value="EM"/>
    <property type="resolution" value="4.53 A"/>
    <property type="chains" value="AS9P=3-138"/>
</dbReference>
<dbReference type="PDBsum" id="8HKX"/>
<dbReference type="PDBsum" id="8HKY"/>
<dbReference type="PDBsum" id="8HKZ"/>
<dbReference type="PDBsum" id="8HL1"/>
<dbReference type="PDBsum" id="8HL2"/>
<dbReference type="PDBsum" id="8HL3"/>
<dbReference type="PDBsum" id="8HL4"/>
<dbReference type="PDBsum" id="8HL5"/>
<dbReference type="PDBsum" id="8WKP"/>
<dbReference type="PDBsum" id="8WQ2"/>
<dbReference type="PDBsum" id="8WQ4"/>
<dbReference type="EMDB" id="EMD-34862"/>
<dbReference type="EMDB" id="EMD-34863"/>
<dbReference type="EMDB" id="EMD-34864"/>
<dbReference type="EMDB" id="EMD-34866"/>
<dbReference type="EMDB" id="EMD-34867"/>
<dbReference type="EMDB" id="EMD-34868"/>
<dbReference type="EMDB" id="EMD-34869"/>
<dbReference type="EMDB" id="EMD-34870"/>
<dbReference type="EMDB" id="EMD-37604"/>
<dbReference type="EMDB" id="EMD-37733"/>
<dbReference type="EMDB" id="EMD-37734"/>
<dbReference type="SMR" id="P39468"/>
<dbReference type="STRING" id="330779.Saci_0086"/>
<dbReference type="GeneID" id="14550616"/>
<dbReference type="KEGG" id="sai:Saci_0086"/>
<dbReference type="PATRIC" id="fig|330779.12.peg.80"/>
<dbReference type="eggNOG" id="arCOG04243">
    <property type="taxonomic scope" value="Archaea"/>
</dbReference>
<dbReference type="HOGENOM" id="CLU_046483_4_0_2"/>
<dbReference type="Proteomes" id="UP000001018">
    <property type="component" value="Chromosome"/>
</dbReference>
<dbReference type="GO" id="GO:0022627">
    <property type="term" value="C:cytosolic small ribosomal subunit"/>
    <property type="evidence" value="ECO:0007669"/>
    <property type="project" value="TreeGrafter"/>
</dbReference>
<dbReference type="GO" id="GO:0003723">
    <property type="term" value="F:RNA binding"/>
    <property type="evidence" value="ECO:0007669"/>
    <property type="project" value="TreeGrafter"/>
</dbReference>
<dbReference type="GO" id="GO:0003735">
    <property type="term" value="F:structural constituent of ribosome"/>
    <property type="evidence" value="ECO:0007669"/>
    <property type="project" value="InterPro"/>
</dbReference>
<dbReference type="GO" id="GO:0000462">
    <property type="term" value="P:maturation of SSU-rRNA from tricistronic rRNA transcript (SSU-rRNA, 5.8S rRNA, LSU-rRNA)"/>
    <property type="evidence" value="ECO:0007669"/>
    <property type="project" value="TreeGrafter"/>
</dbReference>
<dbReference type="GO" id="GO:0006412">
    <property type="term" value="P:translation"/>
    <property type="evidence" value="ECO:0007669"/>
    <property type="project" value="UniProtKB-UniRule"/>
</dbReference>
<dbReference type="Gene3D" id="3.30.230.10">
    <property type="match status" value="1"/>
</dbReference>
<dbReference type="HAMAP" id="MF_00532_A">
    <property type="entry name" value="Ribosomal_uS9_A"/>
    <property type="match status" value="1"/>
</dbReference>
<dbReference type="InterPro" id="IPR020568">
    <property type="entry name" value="Ribosomal_Su5_D2-typ_SF"/>
</dbReference>
<dbReference type="InterPro" id="IPR000754">
    <property type="entry name" value="Ribosomal_uS9"/>
</dbReference>
<dbReference type="InterPro" id="IPR019958">
    <property type="entry name" value="Ribosomal_uS9_archaeal"/>
</dbReference>
<dbReference type="InterPro" id="IPR020574">
    <property type="entry name" value="Ribosomal_uS9_CS"/>
</dbReference>
<dbReference type="InterPro" id="IPR014721">
    <property type="entry name" value="Ribsml_uS5_D2-typ_fold_subgr"/>
</dbReference>
<dbReference type="NCBIfam" id="NF001749">
    <property type="entry name" value="PRK00474.1"/>
    <property type="match status" value="1"/>
</dbReference>
<dbReference type="NCBIfam" id="TIGR03627">
    <property type="entry name" value="uS9_arch"/>
    <property type="match status" value="1"/>
</dbReference>
<dbReference type="PANTHER" id="PTHR21569:SF16">
    <property type="entry name" value="RIBOSOMAL PROTEIN S16"/>
    <property type="match status" value="1"/>
</dbReference>
<dbReference type="PANTHER" id="PTHR21569">
    <property type="entry name" value="RIBOSOMAL PROTEIN S9"/>
    <property type="match status" value="1"/>
</dbReference>
<dbReference type="Pfam" id="PF00380">
    <property type="entry name" value="Ribosomal_S9"/>
    <property type="match status" value="1"/>
</dbReference>
<dbReference type="SUPFAM" id="SSF54211">
    <property type="entry name" value="Ribosomal protein S5 domain 2-like"/>
    <property type="match status" value="1"/>
</dbReference>
<dbReference type="PROSITE" id="PS00360">
    <property type="entry name" value="RIBOSOMAL_S9"/>
    <property type="match status" value="1"/>
</dbReference>
<evidence type="ECO:0000305" key="1"/>
<feature type="chain" id="PRO_0000111474" description="Small ribosomal subunit protein uS9">
    <location>
        <begin position="1"/>
        <end position="138"/>
    </location>
</feature>
<feature type="sequence conflict" description="In Ref. 1; CAA56483." evidence="1" ref="1">
    <original>K</original>
    <variation>S</variation>
    <location>
        <position position="16"/>
    </location>
</feature>
<feature type="sequence conflict" description="In Ref. 1; CAA56483." evidence="1" ref="1">
    <original>G</original>
    <variation>V</variation>
    <location>
        <position position="58"/>
    </location>
</feature>
<feature type="sequence conflict" description="In Ref. 1; CAA56483." evidence="1" ref="1">
    <original>L</original>
    <variation>H</variation>
    <location>
        <position position="87"/>
    </location>
</feature>
<protein>
    <recommendedName>
        <fullName evidence="1">Small ribosomal subunit protein uS9</fullName>
    </recommendedName>
    <alternativeName>
        <fullName>30S ribosomal protein S9</fullName>
    </alternativeName>
</protein>
<proteinExistence type="evidence at protein level"/>
<organism>
    <name type="scientific">Sulfolobus acidocaldarius (strain ATCC 33909 / DSM 639 / JCM 8929 / NBRC 15157 / NCIMB 11770)</name>
    <dbReference type="NCBI Taxonomy" id="330779"/>
    <lineage>
        <taxon>Archaea</taxon>
        <taxon>Thermoproteota</taxon>
        <taxon>Thermoprotei</taxon>
        <taxon>Sulfolobales</taxon>
        <taxon>Sulfolobaceae</taxon>
        <taxon>Sulfolobus</taxon>
    </lineage>
</organism>
<name>RS9_SULAC</name>
<sequence>MSQAEQNFMITYARRKSARASCYIKPGNGKVFVNDIPIEIIPIEVVRYKIMEPLVLAGDKITSSIEARIYTQGGGIMGQADAARMALARALVKFTNSKELVEIYKSYDRTMLAGDPRQTESEKWMRYSARRWRQKAYR</sequence>